<accession>P42861</accession>
<feature type="chain" id="PRO_0000180546" description="Glucose-6-phosphate isomerase">
    <location>
        <begin position="1"/>
        <end position="605"/>
    </location>
</feature>
<feature type="active site" description="Proton donor" evidence="1">
    <location>
        <position position="410"/>
    </location>
</feature>
<feature type="active site" evidence="1">
    <location>
        <position position="441"/>
    </location>
</feature>
<feature type="active site" evidence="1">
    <location>
        <position position="569"/>
    </location>
</feature>
<feature type="helix" evidence="4">
    <location>
        <begin position="50"/>
        <end position="52"/>
    </location>
</feature>
<feature type="helix" evidence="4">
    <location>
        <begin position="54"/>
        <end position="66"/>
    </location>
</feature>
<feature type="helix" evidence="4">
    <location>
        <begin position="71"/>
        <end position="77"/>
    </location>
</feature>
<feature type="helix" evidence="4">
    <location>
        <begin position="81"/>
        <end position="84"/>
    </location>
</feature>
<feature type="strand" evidence="4">
    <location>
        <begin position="86"/>
        <end position="90"/>
    </location>
</feature>
<feature type="strand" evidence="4">
    <location>
        <begin position="97"/>
        <end position="101"/>
    </location>
</feature>
<feature type="strand" evidence="4">
    <location>
        <begin position="104"/>
        <end position="106"/>
    </location>
</feature>
<feature type="helix" evidence="4">
    <location>
        <begin position="109"/>
        <end position="121"/>
    </location>
</feature>
<feature type="helix" evidence="4">
    <location>
        <begin position="124"/>
        <end position="132"/>
    </location>
</feature>
<feature type="turn" evidence="4">
    <location>
        <begin position="139"/>
        <end position="142"/>
    </location>
</feature>
<feature type="helix" evidence="4">
    <location>
        <begin position="147"/>
        <end position="150"/>
    </location>
</feature>
<feature type="helix" evidence="4">
    <location>
        <begin position="165"/>
        <end position="185"/>
    </location>
</feature>
<feature type="strand" evidence="4">
    <location>
        <begin position="198"/>
        <end position="202"/>
    </location>
</feature>
<feature type="helix" evidence="4">
    <location>
        <begin position="205"/>
        <end position="207"/>
    </location>
</feature>
<feature type="helix" evidence="4">
    <location>
        <begin position="209"/>
        <end position="217"/>
    </location>
</feature>
<feature type="helix" evidence="4">
    <location>
        <begin position="219"/>
        <end position="221"/>
    </location>
</feature>
<feature type="strand" evidence="4">
    <location>
        <begin position="224"/>
        <end position="231"/>
    </location>
</feature>
<feature type="helix" evidence="4">
    <location>
        <begin position="237"/>
        <end position="243"/>
    </location>
</feature>
<feature type="helix" evidence="4">
    <location>
        <begin position="248"/>
        <end position="250"/>
    </location>
</feature>
<feature type="strand" evidence="4">
    <location>
        <begin position="251"/>
        <end position="256"/>
    </location>
</feature>
<feature type="strand" evidence="4">
    <location>
        <begin position="258"/>
        <end position="260"/>
    </location>
</feature>
<feature type="helix" evidence="4">
    <location>
        <begin position="263"/>
        <end position="282"/>
    </location>
</feature>
<feature type="helix" evidence="4">
    <location>
        <begin position="290"/>
        <end position="294"/>
    </location>
</feature>
<feature type="strand" evidence="4">
    <location>
        <begin position="295"/>
        <end position="298"/>
    </location>
</feature>
<feature type="helix" evidence="4">
    <location>
        <begin position="302"/>
        <end position="307"/>
    </location>
</feature>
<feature type="helix" evidence="4">
    <location>
        <begin position="312"/>
        <end position="314"/>
    </location>
</feature>
<feature type="helix" evidence="4">
    <location>
        <begin position="324"/>
        <end position="326"/>
    </location>
</feature>
<feature type="helix" evidence="4">
    <location>
        <begin position="331"/>
        <end position="333"/>
    </location>
</feature>
<feature type="helix" evidence="4">
    <location>
        <begin position="334"/>
        <end position="361"/>
    </location>
</feature>
<feature type="helix" evidence="4">
    <location>
        <begin position="364"/>
        <end position="366"/>
    </location>
</feature>
<feature type="helix" evidence="4">
    <location>
        <begin position="368"/>
        <end position="381"/>
    </location>
</feature>
<feature type="strand" evidence="4">
    <location>
        <begin position="387"/>
        <end position="394"/>
    </location>
</feature>
<feature type="helix" evidence="4">
    <location>
        <begin position="395"/>
        <end position="397"/>
    </location>
</feature>
<feature type="helix" evidence="4">
    <location>
        <begin position="400"/>
        <end position="412"/>
    </location>
</feature>
<feature type="strand" evidence="4">
    <location>
        <begin position="430"/>
        <end position="432"/>
    </location>
</feature>
<feature type="helix" evidence="4">
    <location>
        <begin position="438"/>
        <end position="441"/>
    </location>
</feature>
<feature type="helix" evidence="4">
    <location>
        <begin position="444"/>
        <end position="449"/>
    </location>
</feature>
<feature type="strand" evidence="3">
    <location>
        <begin position="450"/>
        <end position="452"/>
    </location>
</feature>
<feature type="strand" evidence="4">
    <location>
        <begin position="456"/>
        <end position="463"/>
    </location>
</feature>
<feature type="strand" evidence="4">
    <location>
        <begin position="465"/>
        <end position="470"/>
    </location>
</feature>
<feature type="helix" evidence="4">
    <location>
        <begin position="471"/>
        <end position="488"/>
    </location>
</feature>
<feature type="helix" evidence="4">
    <location>
        <begin position="492"/>
        <end position="501"/>
    </location>
</feature>
<feature type="turn" evidence="4">
    <location>
        <begin position="508"/>
        <end position="512"/>
    </location>
</feature>
<feature type="helix" evidence="4">
    <location>
        <begin position="513"/>
        <end position="516"/>
    </location>
</feature>
<feature type="strand" evidence="4">
    <location>
        <begin position="525"/>
        <end position="530"/>
    </location>
</feature>
<feature type="helix" evidence="4">
    <location>
        <begin position="534"/>
        <end position="555"/>
    </location>
</feature>
<feature type="helix" evidence="4">
    <location>
        <begin position="563"/>
        <end position="565"/>
    </location>
</feature>
<feature type="helix" evidence="4">
    <location>
        <begin position="566"/>
        <end position="575"/>
    </location>
</feature>
<feature type="helix" evidence="4">
    <location>
        <begin position="576"/>
        <end position="578"/>
    </location>
</feature>
<feature type="helix" evidence="4">
    <location>
        <begin position="590"/>
        <end position="602"/>
    </location>
</feature>
<protein>
    <recommendedName>
        <fullName>Glucose-6-phosphate isomerase</fullName>
        <shortName>GPI</shortName>
        <ecNumber>5.3.1.9</ecNumber>
    </recommendedName>
    <alternativeName>
        <fullName>Phosphoglucose isomerase</fullName>
        <shortName>PGI</shortName>
    </alternativeName>
    <alternativeName>
        <fullName>Phosphohexose isomerase</fullName>
        <shortName>PHI</shortName>
    </alternativeName>
</protein>
<dbReference type="EC" id="5.3.1.9"/>
<dbReference type="EMBL" id="X78206">
    <property type="protein sequence ID" value="CAA55042.1"/>
    <property type="molecule type" value="Genomic_DNA"/>
</dbReference>
<dbReference type="PDB" id="1Q50">
    <property type="method" value="X-ray"/>
    <property type="resolution" value="2.60 A"/>
    <property type="chains" value="A=44-604"/>
</dbReference>
<dbReference type="PDB" id="1T10">
    <property type="method" value="X-ray"/>
    <property type="resolution" value="2.35 A"/>
    <property type="chains" value="A=1-605"/>
</dbReference>
<dbReference type="PDBsum" id="1Q50"/>
<dbReference type="PDBsum" id="1T10"/>
<dbReference type="SMR" id="P42861"/>
<dbReference type="VEuPathDB" id="TriTrypDB:LmxM.12.0530"/>
<dbReference type="UniPathway" id="UPA00109">
    <property type="reaction ID" value="UER00181"/>
</dbReference>
<dbReference type="EvolutionaryTrace" id="P42861"/>
<dbReference type="GO" id="GO:0005829">
    <property type="term" value="C:cytosol"/>
    <property type="evidence" value="ECO:0007669"/>
    <property type="project" value="TreeGrafter"/>
</dbReference>
<dbReference type="GO" id="GO:0097367">
    <property type="term" value="F:carbohydrate derivative binding"/>
    <property type="evidence" value="ECO:0007669"/>
    <property type="project" value="InterPro"/>
</dbReference>
<dbReference type="GO" id="GO:0004347">
    <property type="term" value="F:glucose-6-phosphate isomerase activity"/>
    <property type="evidence" value="ECO:0007669"/>
    <property type="project" value="UniProtKB-EC"/>
</dbReference>
<dbReference type="GO" id="GO:0048029">
    <property type="term" value="F:monosaccharide binding"/>
    <property type="evidence" value="ECO:0007669"/>
    <property type="project" value="TreeGrafter"/>
</dbReference>
<dbReference type="GO" id="GO:0006094">
    <property type="term" value="P:gluconeogenesis"/>
    <property type="evidence" value="ECO:0007669"/>
    <property type="project" value="UniProtKB-KW"/>
</dbReference>
<dbReference type="GO" id="GO:0051156">
    <property type="term" value="P:glucose 6-phosphate metabolic process"/>
    <property type="evidence" value="ECO:0007669"/>
    <property type="project" value="TreeGrafter"/>
</dbReference>
<dbReference type="GO" id="GO:0006096">
    <property type="term" value="P:glycolytic process"/>
    <property type="evidence" value="ECO:0007669"/>
    <property type="project" value="UniProtKB-UniPathway"/>
</dbReference>
<dbReference type="CDD" id="cd05015">
    <property type="entry name" value="SIS_PGI_1"/>
    <property type="match status" value="1"/>
</dbReference>
<dbReference type="CDD" id="cd05016">
    <property type="entry name" value="SIS_PGI_2"/>
    <property type="match status" value="1"/>
</dbReference>
<dbReference type="FunFam" id="1.10.1390.10:FF:000001">
    <property type="entry name" value="Glucose-6-phosphate isomerase"/>
    <property type="match status" value="1"/>
</dbReference>
<dbReference type="FunFam" id="3.40.50.10490:FF:000004">
    <property type="entry name" value="Glucose-6-phosphate isomerase"/>
    <property type="match status" value="1"/>
</dbReference>
<dbReference type="Gene3D" id="1.10.1390.10">
    <property type="match status" value="1"/>
</dbReference>
<dbReference type="Gene3D" id="3.40.50.10490">
    <property type="entry name" value="Glucose-6-phosphate isomerase like protein, domain 1"/>
    <property type="match status" value="2"/>
</dbReference>
<dbReference type="HAMAP" id="MF_00473">
    <property type="entry name" value="G6P_isomerase"/>
    <property type="match status" value="1"/>
</dbReference>
<dbReference type="InterPro" id="IPR001672">
    <property type="entry name" value="G6P_Isomerase"/>
</dbReference>
<dbReference type="InterPro" id="IPR023096">
    <property type="entry name" value="G6P_Isomerase_C"/>
</dbReference>
<dbReference type="InterPro" id="IPR018189">
    <property type="entry name" value="Phosphoglucose_isomerase_CS"/>
</dbReference>
<dbReference type="InterPro" id="IPR046348">
    <property type="entry name" value="SIS_dom_sf"/>
</dbReference>
<dbReference type="InterPro" id="IPR035476">
    <property type="entry name" value="SIS_PGI_1"/>
</dbReference>
<dbReference type="InterPro" id="IPR035482">
    <property type="entry name" value="SIS_PGI_2"/>
</dbReference>
<dbReference type="NCBIfam" id="NF001211">
    <property type="entry name" value="PRK00179.1"/>
    <property type="match status" value="1"/>
</dbReference>
<dbReference type="PANTHER" id="PTHR11469">
    <property type="entry name" value="GLUCOSE-6-PHOSPHATE ISOMERASE"/>
    <property type="match status" value="1"/>
</dbReference>
<dbReference type="PANTHER" id="PTHR11469:SF1">
    <property type="entry name" value="GLUCOSE-6-PHOSPHATE ISOMERASE"/>
    <property type="match status" value="1"/>
</dbReference>
<dbReference type="Pfam" id="PF00342">
    <property type="entry name" value="PGI"/>
    <property type="match status" value="1"/>
</dbReference>
<dbReference type="PRINTS" id="PR00662">
    <property type="entry name" value="G6PISOMERASE"/>
</dbReference>
<dbReference type="SUPFAM" id="SSF53697">
    <property type="entry name" value="SIS domain"/>
    <property type="match status" value="1"/>
</dbReference>
<dbReference type="PROSITE" id="PS00765">
    <property type="entry name" value="P_GLUCOSE_ISOMERASE_1"/>
    <property type="match status" value="1"/>
</dbReference>
<dbReference type="PROSITE" id="PS00174">
    <property type="entry name" value="P_GLUCOSE_ISOMERASE_2"/>
    <property type="match status" value="1"/>
</dbReference>
<dbReference type="PROSITE" id="PS51463">
    <property type="entry name" value="P_GLUCOSE_ISOMERASE_3"/>
    <property type="match status" value="1"/>
</dbReference>
<name>G6PI_LEIME</name>
<comment type="catalytic activity">
    <reaction>
        <text>alpha-D-glucose 6-phosphate = beta-D-fructose 6-phosphate</text>
        <dbReference type="Rhea" id="RHEA:11816"/>
        <dbReference type="ChEBI" id="CHEBI:57634"/>
        <dbReference type="ChEBI" id="CHEBI:58225"/>
        <dbReference type="EC" id="5.3.1.9"/>
    </reaction>
</comment>
<comment type="pathway">
    <text>Carbohydrate degradation; glycolysis; D-glyceraldehyde 3-phosphate and glycerone phosphate from D-glucose: step 2/4.</text>
</comment>
<comment type="subcellular location">
    <subcellularLocation>
        <location>Cytoplasm</location>
    </subcellularLocation>
</comment>
<comment type="similarity">
    <text evidence="2">Belongs to the GPI family.</text>
</comment>
<proteinExistence type="evidence at protein level"/>
<reference key="1">
    <citation type="journal article" date="1994" name="Mol. Biochem. Parasitol.">
        <title>Subcellular distribution and characterization of glucosephosphate isomerase in Leishmania mexicana mexicana.</title>
        <authorList>
            <person name="Nyame K."/>
            <person name="Do Thi C.D."/>
            <person name="Opperdoes F.R."/>
            <person name="Michels P.A.M."/>
        </authorList>
    </citation>
    <scope>NUCLEOTIDE SEQUENCE [GENOMIC DNA]</scope>
    <source>
        <strain>NHOM/BZ/84/BEL46</strain>
    </source>
</reference>
<sequence>MSDYFSKLKEHVVESTEINGCTPSIATATFNAPYEVARKTKMLGVTDSSLLNLPAWKRLQSLYEKYGNDSILSHFEKDHQRFQRYSIEIDLHSDDNFLFLDYSKSHINDEIKDALVALAEERGVRAFAKAMFDGQRVNSTENRAVLHVALRNRSNRPIIVDGKDVMSDVNNVLAQMKDFTERVRSGEWKGQTGKSIYNIVNIGIGGSDLGPVMVTEALKPFSKRDLHCFFVSNVDGTHMAEVLKQVNLEETIFIIASKTFTTQETLTNAMSARNALMSYLKENGISTDGAVAKHFVALSTNTEKVREFGIDTVNMFAFWDWVGGRYSVWSAIGLSVMLSIGYDNFVEFLTGAHVMDNHFASTPTEQNLPMMLALVGIWYNNFFGSETQAVLPYDQYLWRLPAYLQQLDMESNGKGVTKKSGAVAVQTGPIVFGEAGTNGQHAFYQLIHQGTKIIPCDFIGCVQTQNRVGDHHRTLMSNFFAQTEALMVGKNAEEVRQELVKSGMSGDAIENMIPHKTFTGSRPSNSILVNALTPRALGAIIAMYEHKVLVQGAIWGINSYDQWGVELGKVLAKSILPQLKSGNIVSDHDGSTNGLINMFNTRAHL</sequence>
<gene>
    <name type="primary">PGI</name>
</gene>
<evidence type="ECO:0000250" key="1"/>
<evidence type="ECO:0000305" key="2"/>
<evidence type="ECO:0007829" key="3">
    <source>
        <dbReference type="PDB" id="1Q50"/>
    </source>
</evidence>
<evidence type="ECO:0007829" key="4">
    <source>
        <dbReference type="PDB" id="1T10"/>
    </source>
</evidence>
<keyword id="KW-0002">3D-structure</keyword>
<keyword id="KW-0963">Cytoplasm</keyword>
<keyword id="KW-0312">Gluconeogenesis</keyword>
<keyword id="KW-0324">Glycolysis</keyword>
<keyword id="KW-0413">Isomerase</keyword>
<organism>
    <name type="scientific">Leishmania mexicana</name>
    <dbReference type="NCBI Taxonomy" id="5665"/>
    <lineage>
        <taxon>Eukaryota</taxon>
        <taxon>Discoba</taxon>
        <taxon>Euglenozoa</taxon>
        <taxon>Kinetoplastea</taxon>
        <taxon>Metakinetoplastina</taxon>
        <taxon>Trypanosomatida</taxon>
        <taxon>Trypanosomatidae</taxon>
        <taxon>Leishmaniinae</taxon>
        <taxon>Leishmania</taxon>
    </lineage>
</organism>